<feature type="chain" id="PRO_0000069191" description="B2 bradykinin receptor">
    <location>
        <begin position="1"/>
        <end position="392"/>
    </location>
</feature>
<feature type="topological domain" description="Extracellular" evidence="3">
    <location>
        <begin position="1"/>
        <end position="61"/>
    </location>
</feature>
<feature type="transmembrane region" description="Helical; Name=1" evidence="3">
    <location>
        <begin position="62"/>
        <end position="85"/>
    </location>
</feature>
<feature type="topological domain" description="Cytoplasmic" evidence="3">
    <location>
        <begin position="86"/>
        <end position="94"/>
    </location>
</feature>
<feature type="transmembrane region" description="Helical; Name=2" evidence="3">
    <location>
        <begin position="95"/>
        <end position="119"/>
    </location>
</feature>
<feature type="topological domain" description="Extracellular" evidence="3">
    <location>
        <begin position="120"/>
        <end position="132"/>
    </location>
</feature>
<feature type="transmembrane region" description="Helical; Name=3" evidence="3">
    <location>
        <begin position="133"/>
        <end position="154"/>
    </location>
</feature>
<feature type="topological domain" description="Cytoplasmic" evidence="3">
    <location>
        <begin position="155"/>
        <end position="176"/>
    </location>
</feature>
<feature type="transmembrane region" description="Helical; Name=4" evidence="3">
    <location>
        <begin position="177"/>
        <end position="199"/>
    </location>
</feature>
<feature type="topological domain" description="Extracellular" evidence="3">
    <location>
        <begin position="200"/>
        <end position="222"/>
    </location>
</feature>
<feature type="transmembrane region" description="Helical; Name=5" evidence="3">
    <location>
        <begin position="223"/>
        <end position="249"/>
    </location>
</feature>
<feature type="topological domain" description="Cytoplasmic" evidence="3">
    <location>
        <begin position="250"/>
        <end position="268"/>
    </location>
</feature>
<feature type="transmembrane region" description="Helical; Name=6" evidence="3">
    <location>
        <begin position="269"/>
        <end position="293"/>
    </location>
</feature>
<feature type="topological domain" description="Extracellular" evidence="3">
    <location>
        <begin position="294"/>
        <end position="312"/>
    </location>
</feature>
<feature type="transmembrane region" description="Helical; Name=7" evidence="3">
    <location>
        <begin position="313"/>
        <end position="336"/>
    </location>
</feature>
<feature type="topological domain" description="Cytoplasmic" evidence="3">
    <location>
        <begin position="337"/>
        <end position="392"/>
    </location>
</feature>
<feature type="modified residue" description="Phosphotyrosine" evidence="1">
    <location>
        <position position="157"/>
    </location>
</feature>
<feature type="modified residue" description="Phosphotyrosine" evidence="1">
    <location>
        <position position="348"/>
    </location>
</feature>
<feature type="modified residue" description="Phosphoserine" evidence="1">
    <location>
        <position position="367"/>
    </location>
</feature>
<feature type="modified residue" description="Phosphothreonine" evidence="1">
    <location>
        <position position="370"/>
    </location>
</feature>
<feature type="modified residue" description="Phosphoserine; by GRK6" evidence="2">
    <location>
        <position position="374"/>
    </location>
</feature>
<feature type="modified residue" description="Phosphoserine; by GRK6" evidence="2">
    <location>
        <position position="376"/>
    </location>
</feature>
<feature type="lipid moiety-binding region" description="S-palmitoyl cysteine" evidence="3">
    <location>
        <position position="352"/>
    </location>
</feature>
<feature type="glycosylation site" description="N-linked (GlcNAc...) asparagine" evidence="3">
    <location>
        <position position="29"/>
    </location>
</feature>
<feature type="glycosylation site" description="N-linked (GlcNAc...) asparagine" evidence="3">
    <location>
        <position position="40"/>
    </location>
</feature>
<feature type="glycosylation site" description="N-linked (GlcNAc...) asparagine" evidence="3">
    <location>
        <position position="208"/>
    </location>
</feature>
<feature type="disulfide bond" evidence="4">
    <location>
        <begin position="131"/>
        <end position="212"/>
    </location>
</feature>
<feature type="splice variant" id="VSP_001866" description="In isoform Short." evidence="7 8">
    <location>
        <begin position="1"/>
        <end position="26"/>
    </location>
</feature>
<feature type="sequence conflict" description="In Ref. 1 and 4." evidence="9" ref="1 4">
    <original>R</original>
    <variation>A</variation>
    <location>
        <position position="298"/>
    </location>
</feature>
<protein>
    <recommendedName>
        <fullName>B2 bradykinin receptor</fullName>
        <shortName>B2R</shortName>
        <shortName>BK-2 receptor</shortName>
    </recommendedName>
</protein>
<comment type="function">
    <text evidence="5 6">Receptor for bradykinin. It is associated with G proteins that activate a phosphatidylinositol-calcium second messenger system.</text>
</comment>
<comment type="subunit">
    <text evidence="2">Forms a complex with PECAM1 and GNAQ. Interacts with PECAM1 (By similarity).</text>
</comment>
<comment type="subcellular location">
    <subcellularLocation>
        <location evidence="2">Cell membrane</location>
        <topology evidence="3">Multi-pass membrane protein</topology>
    </subcellularLocation>
</comment>
<comment type="alternative products">
    <event type="alternative splicing"/>
    <isoform>
        <id>P32299-1</id>
        <name>Long</name>
        <sequence type="displayed"/>
    </isoform>
    <isoform>
        <id>P32299-2</id>
        <name>Short</name>
        <sequence type="described" ref="VSP_001866"/>
    </isoform>
</comment>
<comment type="similarity">
    <text evidence="4">Belongs to the G-protein coupled receptor 1 family. Bradykinin receptor subfamily. BDKRB2 sub-subfamily.</text>
</comment>
<dbReference type="EMBL" id="X69676">
    <property type="protein sequence ID" value="CAA49357.1"/>
    <property type="molecule type" value="Genomic_DNA"/>
</dbReference>
<dbReference type="EMBL" id="X69682">
    <property type="protein sequence ID" value="CAA49362.1"/>
    <property type="molecule type" value="mRNA"/>
</dbReference>
<dbReference type="EMBL" id="L26047">
    <property type="protein sequence ID" value="AAA19797.1"/>
    <property type="molecule type" value="Unassigned_DNA"/>
</dbReference>
<dbReference type="EMBL" id="X78438">
    <property type="protein sequence ID" value="CAA55202.1"/>
    <property type="molecule type" value="mRNA"/>
</dbReference>
<dbReference type="EMBL" id="L27595">
    <property type="protein sequence ID" value="AAA62616.1"/>
    <property type="molecule type" value="Genomic_DNA"/>
</dbReference>
<dbReference type="EMBL" id="BC137755">
    <property type="protein sequence ID" value="AAI37756.1"/>
    <property type="molecule type" value="mRNA"/>
</dbReference>
<dbReference type="CCDS" id="CCDS49160.1">
    <molecule id="P32299-1"/>
</dbReference>
<dbReference type="PIR" id="I49519">
    <property type="entry name" value="I49519"/>
</dbReference>
<dbReference type="RefSeq" id="NP_033877.3">
    <molecule id="P32299-1"/>
    <property type="nucleotide sequence ID" value="NM_009747.2"/>
</dbReference>
<dbReference type="RefSeq" id="XP_006515505.1">
    <molecule id="P32299-1"/>
    <property type="nucleotide sequence ID" value="XM_006515442.5"/>
</dbReference>
<dbReference type="SMR" id="P32299"/>
<dbReference type="FunCoup" id="P32299">
    <property type="interactions" value="1258"/>
</dbReference>
<dbReference type="STRING" id="10090.ENSMUSP00000001652"/>
<dbReference type="DrugCentral" id="P32299"/>
<dbReference type="GuidetoPHARMACOLOGY" id="42"/>
<dbReference type="GlyCosmos" id="P32299">
    <property type="glycosylation" value="3 sites, No reported glycans"/>
</dbReference>
<dbReference type="GlyGen" id="P32299">
    <property type="glycosylation" value="3 sites"/>
</dbReference>
<dbReference type="iPTMnet" id="P32299"/>
<dbReference type="PhosphoSitePlus" id="P32299"/>
<dbReference type="SwissPalm" id="P32299"/>
<dbReference type="PaxDb" id="10090-ENSMUSP00000001652"/>
<dbReference type="ProteomicsDB" id="273496">
    <molecule id="P32299-1"/>
</dbReference>
<dbReference type="ProteomicsDB" id="273497">
    <molecule id="P32299-2"/>
</dbReference>
<dbReference type="Antibodypedia" id="14184">
    <property type="antibodies" value="286 antibodies from 35 providers"/>
</dbReference>
<dbReference type="DNASU" id="12062"/>
<dbReference type="Ensembl" id="ENSMUST00000001652.7">
    <molecule id="P32299-1"/>
    <property type="protein sequence ID" value="ENSMUSP00000001652.6"/>
    <property type="gene ID" value="ENSMUSG00000021070.7"/>
</dbReference>
<dbReference type="GeneID" id="12062"/>
<dbReference type="KEGG" id="mmu:12062"/>
<dbReference type="UCSC" id="uc007oym.1">
    <molecule id="P32299-1"/>
    <property type="organism name" value="mouse"/>
</dbReference>
<dbReference type="AGR" id="MGI:102845"/>
<dbReference type="CTD" id="624"/>
<dbReference type="MGI" id="MGI:102845">
    <property type="gene designation" value="Bdkrb2"/>
</dbReference>
<dbReference type="VEuPathDB" id="HostDB:ENSMUSG00000021070"/>
<dbReference type="eggNOG" id="ENOG502QTX6">
    <property type="taxonomic scope" value="Eukaryota"/>
</dbReference>
<dbReference type="GeneTree" id="ENSGT01130000278308"/>
<dbReference type="HOGENOM" id="CLU_009579_8_3_1"/>
<dbReference type="InParanoid" id="P32299"/>
<dbReference type="OMA" id="FNWPFGQ"/>
<dbReference type="OrthoDB" id="6076970at2759"/>
<dbReference type="PhylomeDB" id="P32299"/>
<dbReference type="TreeFam" id="TF330024"/>
<dbReference type="Reactome" id="R-MMU-375276">
    <property type="pathway name" value="Peptide ligand-binding receptors"/>
</dbReference>
<dbReference type="Reactome" id="R-MMU-416476">
    <property type="pathway name" value="G alpha (q) signalling events"/>
</dbReference>
<dbReference type="Reactome" id="R-MMU-418594">
    <property type="pathway name" value="G alpha (i) signalling events"/>
</dbReference>
<dbReference type="BioGRID-ORCS" id="12062">
    <property type="hits" value="1 hit in 78 CRISPR screens"/>
</dbReference>
<dbReference type="ChiTaRS" id="Bdkrb2">
    <property type="organism name" value="mouse"/>
</dbReference>
<dbReference type="PRO" id="PR:P32299"/>
<dbReference type="Proteomes" id="UP000000589">
    <property type="component" value="Chromosome 12"/>
</dbReference>
<dbReference type="RNAct" id="P32299">
    <property type="molecule type" value="protein"/>
</dbReference>
<dbReference type="Bgee" id="ENSMUSG00000021070">
    <property type="expression patterns" value="Expressed in esophagus and 40 other cell types or tissues"/>
</dbReference>
<dbReference type="GO" id="GO:0005768">
    <property type="term" value="C:endosome"/>
    <property type="evidence" value="ECO:0007669"/>
    <property type="project" value="Ensembl"/>
</dbReference>
<dbReference type="GO" id="GO:0005886">
    <property type="term" value="C:plasma membrane"/>
    <property type="evidence" value="ECO:0007669"/>
    <property type="project" value="UniProtKB-SubCell"/>
</dbReference>
<dbReference type="GO" id="GO:0004947">
    <property type="term" value="F:bradykinin receptor activity"/>
    <property type="evidence" value="ECO:0007669"/>
    <property type="project" value="Ensembl"/>
</dbReference>
<dbReference type="GO" id="GO:0002020">
    <property type="term" value="F:protease binding"/>
    <property type="evidence" value="ECO:0007669"/>
    <property type="project" value="Ensembl"/>
</dbReference>
<dbReference type="GO" id="GO:0046982">
    <property type="term" value="F:protein heterodimerization activity"/>
    <property type="evidence" value="ECO:0007669"/>
    <property type="project" value="Ensembl"/>
</dbReference>
<dbReference type="GO" id="GO:0031702">
    <property type="term" value="F:type 1 angiotensin receptor binding"/>
    <property type="evidence" value="ECO:0007669"/>
    <property type="project" value="Ensembl"/>
</dbReference>
<dbReference type="GO" id="GO:0050482">
    <property type="term" value="P:arachidonate secretion"/>
    <property type="evidence" value="ECO:0007669"/>
    <property type="project" value="Ensembl"/>
</dbReference>
<dbReference type="GO" id="GO:1990127">
    <property type="term" value="P:intrinsic apoptotic signaling pathway in response to osmotic stress by p53 class mediator"/>
    <property type="evidence" value="ECO:0000316"/>
    <property type="project" value="MGI"/>
</dbReference>
<dbReference type="GO" id="GO:1902219">
    <property type="term" value="P:negative regulation of intrinsic apoptotic signaling pathway in response to osmotic stress"/>
    <property type="evidence" value="ECO:0000315"/>
    <property type="project" value="MGI"/>
</dbReference>
<dbReference type="GO" id="GO:1902239">
    <property type="term" value="P:negative regulation of intrinsic apoptotic signaling pathway in response to osmotic stress by p53 class mediator"/>
    <property type="evidence" value="ECO:0000316"/>
    <property type="project" value="MGI"/>
</dbReference>
<dbReference type="GO" id="GO:0009651">
    <property type="term" value="P:response to salt stress"/>
    <property type="evidence" value="ECO:0000316"/>
    <property type="project" value="MGI"/>
</dbReference>
<dbReference type="GO" id="GO:0006939">
    <property type="term" value="P:smooth muscle contraction"/>
    <property type="evidence" value="ECO:0007669"/>
    <property type="project" value="InterPro"/>
</dbReference>
<dbReference type="GO" id="GO:0042310">
    <property type="term" value="P:vasoconstriction"/>
    <property type="evidence" value="ECO:0007669"/>
    <property type="project" value="InterPro"/>
</dbReference>
<dbReference type="GO" id="GO:0042311">
    <property type="term" value="P:vasodilation"/>
    <property type="evidence" value="ECO:0000315"/>
    <property type="project" value="MGI"/>
</dbReference>
<dbReference type="CDD" id="cd15381">
    <property type="entry name" value="7tmA_BK-2"/>
    <property type="match status" value="1"/>
</dbReference>
<dbReference type="FunFam" id="1.20.1070.10:FF:000201">
    <property type="entry name" value="Bradykinin receptor B2"/>
    <property type="match status" value="1"/>
</dbReference>
<dbReference type="Gene3D" id="1.20.1070.10">
    <property type="entry name" value="Rhodopsin 7-helix transmembrane proteins"/>
    <property type="match status" value="1"/>
</dbReference>
<dbReference type="InterPro" id="IPR001504">
    <property type="entry name" value="Brdyknn_2_rcpt"/>
</dbReference>
<dbReference type="InterPro" id="IPR000496">
    <property type="entry name" value="Brdyknn_rcpt"/>
</dbReference>
<dbReference type="InterPro" id="IPR050119">
    <property type="entry name" value="CCR1-9-like"/>
</dbReference>
<dbReference type="InterPro" id="IPR000276">
    <property type="entry name" value="GPCR_Rhodpsn"/>
</dbReference>
<dbReference type="InterPro" id="IPR017452">
    <property type="entry name" value="GPCR_Rhodpsn_7TM"/>
</dbReference>
<dbReference type="PANTHER" id="PTHR10489:SF957">
    <property type="entry name" value="B2 BRADYKININ RECEPTOR"/>
    <property type="match status" value="1"/>
</dbReference>
<dbReference type="PANTHER" id="PTHR10489">
    <property type="entry name" value="CELL ADHESION MOLECULE"/>
    <property type="match status" value="1"/>
</dbReference>
<dbReference type="Pfam" id="PF00001">
    <property type="entry name" value="7tm_1"/>
    <property type="match status" value="1"/>
</dbReference>
<dbReference type="PRINTS" id="PR00425">
    <property type="entry name" value="BRADYKININR"/>
</dbReference>
<dbReference type="PRINTS" id="PR00994">
    <property type="entry name" value="BRADYKINNB2R"/>
</dbReference>
<dbReference type="PRINTS" id="PR00237">
    <property type="entry name" value="GPCRRHODOPSN"/>
</dbReference>
<dbReference type="SUPFAM" id="SSF81321">
    <property type="entry name" value="Family A G protein-coupled receptor-like"/>
    <property type="match status" value="1"/>
</dbReference>
<dbReference type="PROSITE" id="PS00237">
    <property type="entry name" value="G_PROTEIN_RECEP_F1_1"/>
    <property type="match status" value="1"/>
</dbReference>
<dbReference type="PROSITE" id="PS50262">
    <property type="entry name" value="G_PROTEIN_RECEP_F1_2"/>
    <property type="match status" value="1"/>
</dbReference>
<keyword id="KW-0025">Alternative splicing</keyword>
<keyword id="KW-1003">Cell membrane</keyword>
<keyword id="KW-1015">Disulfide bond</keyword>
<keyword id="KW-0297">G-protein coupled receptor</keyword>
<keyword id="KW-0325">Glycoprotein</keyword>
<keyword id="KW-0449">Lipoprotein</keyword>
<keyword id="KW-0472">Membrane</keyword>
<keyword id="KW-0564">Palmitate</keyword>
<keyword id="KW-0597">Phosphoprotein</keyword>
<keyword id="KW-0675">Receptor</keyword>
<keyword id="KW-1185">Reference proteome</keyword>
<keyword id="KW-0807">Transducer</keyword>
<keyword id="KW-0812">Transmembrane</keyword>
<keyword id="KW-1133">Transmembrane helix</keyword>
<proteinExistence type="evidence at transcript level"/>
<accession>P32299</accession>
<accession>B9EHE3</accession>
<reference key="1">
    <citation type="journal article" date="1993" name="Mol. Pharmacol.">
        <title>Cloned murine bradykinin receptor exhibits a mixed B1 and B2 pharmacological selectivity.</title>
        <authorList>
            <person name="McIntyre P."/>
            <person name="Phillips E."/>
            <person name="Skidmore E."/>
            <person name="Brown M."/>
            <person name="Webb M."/>
        </authorList>
    </citation>
    <scope>NUCLEOTIDE SEQUENCE [GENOMIC DNA / MRNA] (ISOFORM SHORT)</scope>
    <scope>FUNCTION</scope>
    <source>
        <strain>C57BL/6J</strain>
    </source>
</reference>
<reference key="2">
    <citation type="journal article" date="1994" name="Mol. Pharmacol.">
        <title>Differential pharmacology of cloned human and mouse B2 bradykinin receptors.</title>
        <authorList>
            <person name="Hess J.F.R."/>
            <person name="Borkowski J.A."/>
            <person name="Macneil T."/>
            <person name="Stonesifer G.Y."/>
            <person name="Fraher J."/>
            <person name="Strader C.D."/>
            <person name="Ransom R.W."/>
        </authorList>
    </citation>
    <scope>NUCLEOTIDE SEQUENCE (ISOFORM SHORT)</scope>
    <scope>FUNCTION</scope>
    <source>
        <strain>129/J</strain>
    </source>
</reference>
<reference key="3">
    <citation type="journal article" date="1994" name="Biochem. Biophys. Res. Commun.">
        <title>B2 bradykinin receptors in NG108-15 cells: cDNA cloning and functional expression.</title>
        <authorList>
            <person name="Yokoyama S."/>
            <person name="Kimura Y."/>
            <person name="Taketo M."/>
            <person name="Black J.A."/>
            <person name="Ransom B.R."/>
            <person name="Higashida H."/>
        </authorList>
    </citation>
    <scope>NUCLEOTIDE SEQUENCE [MRNA] (ISOFORM SHORT)</scope>
    <source>
        <strain>A/J</strain>
    </source>
</reference>
<reference key="4">
    <citation type="journal article" date="1994" name="Gene">
        <title>Cloning, sequence analysis and expression of the gene encoding the mouse bradykinin B2 receptor.</title>
        <authorList>
            <person name="Ma J.X."/>
            <person name="Wang D.Z."/>
            <person name="Chao L."/>
            <person name="Chao J."/>
        </authorList>
    </citation>
    <scope>NUCLEOTIDE SEQUENCE [GENOMIC DNA]</scope>
</reference>
<reference key="5">
    <citation type="journal article" date="2004" name="Genome Res.">
        <title>The status, quality, and expansion of the NIH full-length cDNA project: the Mammalian Gene Collection (MGC).</title>
        <authorList>
            <consortium name="The MGC Project Team"/>
        </authorList>
    </citation>
    <scope>NUCLEOTIDE SEQUENCE [LARGE SCALE MRNA] (ISOFORM LONG)</scope>
    <source>
        <tissue>Testis</tissue>
    </source>
</reference>
<reference key="6">
    <citation type="journal article" date="1996" name="Biochemistry">
        <title>Structure of the bradykinin B2 receptors' amino terminus.</title>
        <authorList>
            <person name="Abdalla S."/>
            <person name="Godovac-Zimmermann J."/>
            <person name="Braun A."/>
            <person name="Roscher A.A."/>
            <person name="Mueller-Esterl W."/>
            <person name="Quitterer U."/>
        </authorList>
    </citation>
    <scope>IDENTIFICATION OF LONG FORM</scope>
</reference>
<organism>
    <name type="scientific">Mus musculus</name>
    <name type="common">Mouse</name>
    <dbReference type="NCBI Taxonomy" id="10090"/>
    <lineage>
        <taxon>Eukaryota</taxon>
        <taxon>Metazoa</taxon>
        <taxon>Chordata</taxon>
        <taxon>Craniata</taxon>
        <taxon>Vertebrata</taxon>
        <taxon>Euteleostomi</taxon>
        <taxon>Mammalia</taxon>
        <taxon>Eutheria</taxon>
        <taxon>Euarchontoglires</taxon>
        <taxon>Glires</taxon>
        <taxon>Rodentia</taxon>
        <taxon>Myomorpha</taxon>
        <taxon>Muroidea</taxon>
        <taxon>Muridae</taxon>
        <taxon>Murinae</taxon>
        <taxon>Mus</taxon>
        <taxon>Mus</taxon>
    </lineage>
</organism>
<evidence type="ECO:0000250" key="1">
    <source>
        <dbReference type="UniProtKB" id="P25023"/>
    </source>
</evidence>
<evidence type="ECO:0000250" key="2">
    <source>
        <dbReference type="UniProtKB" id="P30411"/>
    </source>
</evidence>
<evidence type="ECO:0000255" key="3"/>
<evidence type="ECO:0000255" key="4">
    <source>
        <dbReference type="PROSITE-ProRule" id="PRU00521"/>
    </source>
</evidence>
<evidence type="ECO:0000269" key="5">
    <source>
    </source>
</evidence>
<evidence type="ECO:0000269" key="6">
    <source>
    </source>
</evidence>
<evidence type="ECO:0000303" key="7">
    <source>
    </source>
</evidence>
<evidence type="ECO:0000303" key="8">
    <source>
    </source>
</evidence>
<evidence type="ECO:0000305" key="9"/>
<name>BKRB2_MOUSE</name>
<sequence length="392" mass="44389">MPCSWKLLGFLSVHEPMPTAASFGIEMFNVTTQVLGSALNGTLSKDNCPDTEWWSWLNAIQAPFLWVLFLLAALENLFVLSVFFLHKNSCTVAEIYLGNLAAADLILACGLPFWAITIANNFDWVFGEVLCRVVNTMIYMNLYSSICFLMLVSIDRYLALVKTMSMGRMRGVRWAKLYSLVIWGCTLLLSSPMLVFRTMREYSEEGHNVTACVIVYPSRSWEVFTNVLLNLVGFLLPLSVITFCTVRILQVLRNNEMKKFKEVQTERKATVLVLAVLGLFVLCWVPFQISTFLDTLLRLGVLSGCWDEHAVDVITQISSYVAYSNSGLNPLVYVIVGKRFRKKSREVYRVLCQKGGCMGEPVQMENSMGTLRTSISVERQIHKLQDWAGKKQ</sequence>
<gene>
    <name type="primary">Bdkrb2</name>
</gene>